<dbReference type="EMBL" id="AF126060">
    <property type="protein sequence ID" value="AAD33270.1"/>
    <property type="molecule type" value="Genomic_DNA"/>
</dbReference>
<dbReference type="EMBL" id="AF126061">
    <property type="protein sequence ID" value="AAD33279.1"/>
    <property type="molecule type" value="Genomic_DNA"/>
</dbReference>
<dbReference type="EMBL" id="AE005672">
    <property type="protein sequence ID" value="AAK74394.1"/>
    <property type="molecule type" value="Genomic_DNA"/>
</dbReference>
<dbReference type="EMBL" id="AY140892">
    <property type="protein sequence ID" value="AAN18256.1"/>
    <property type="molecule type" value="Genomic_DNA"/>
</dbReference>
<dbReference type="PIR" id="A95025">
    <property type="entry name" value="A95025"/>
</dbReference>
<dbReference type="RefSeq" id="WP_000818137.1">
    <property type="nucleotide sequence ID" value="NZ_CP155539.1"/>
</dbReference>
<dbReference type="SMR" id="P61182"/>
<dbReference type="DrugBank" id="DB12825">
    <property type="generic name" value="Lefamulin"/>
</dbReference>
<dbReference type="PaxDb" id="170187-SP_0214"/>
<dbReference type="EnsemblBacteria" id="AAK74394">
    <property type="protein sequence ID" value="AAK74394"/>
    <property type="gene ID" value="SP_0214"/>
</dbReference>
<dbReference type="GeneID" id="93738962"/>
<dbReference type="KEGG" id="spn:SP_0214"/>
<dbReference type="eggNOG" id="COG0091">
    <property type="taxonomic scope" value="Bacteria"/>
</dbReference>
<dbReference type="PhylomeDB" id="P61182"/>
<dbReference type="BioCyc" id="SPNE170187:G1FZB-219-MONOMER"/>
<dbReference type="Proteomes" id="UP000000585">
    <property type="component" value="Chromosome"/>
</dbReference>
<dbReference type="GO" id="GO:0022625">
    <property type="term" value="C:cytosolic large ribosomal subunit"/>
    <property type="evidence" value="ECO:0007669"/>
    <property type="project" value="TreeGrafter"/>
</dbReference>
<dbReference type="GO" id="GO:0019843">
    <property type="term" value="F:rRNA binding"/>
    <property type="evidence" value="ECO:0007669"/>
    <property type="project" value="UniProtKB-UniRule"/>
</dbReference>
<dbReference type="GO" id="GO:0003735">
    <property type="term" value="F:structural constituent of ribosome"/>
    <property type="evidence" value="ECO:0007669"/>
    <property type="project" value="InterPro"/>
</dbReference>
<dbReference type="GO" id="GO:0046677">
    <property type="term" value="P:response to antibiotic"/>
    <property type="evidence" value="ECO:0007669"/>
    <property type="project" value="UniProtKB-KW"/>
</dbReference>
<dbReference type="GO" id="GO:0006412">
    <property type="term" value="P:translation"/>
    <property type="evidence" value="ECO:0007669"/>
    <property type="project" value="UniProtKB-UniRule"/>
</dbReference>
<dbReference type="CDD" id="cd00336">
    <property type="entry name" value="Ribosomal_L22"/>
    <property type="match status" value="1"/>
</dbReference>
<dbReference type="FunFam" id="3.90.470.10:FF:000001">
    <property type="entry name" value="50S ribosomal protein L22"/>
    <property type="match status" value="1"/>
</dbReference>
<dbReference type="Gene3D" id="3.90.470.10">
    <property type="entry name" value="Ribosomal protein L22/L17"/>
    <property type="match status" value="1"/>
</dbReference>
<dbReference type="HAMAP" id="MF_01331_B">
    <property type="entry name" value="Ribosomal_uL22_B"/>
    <property type="match status" value="1"/>
</dbReference>
<dbReference type="InterPro" id="IPR001063">
    <property type="entry name" value="Ribosomal_uL22"/>
</dbReference>
<dbReference type="InterPro" id="IPR005727">
    <property type="entry name" value="Ribosomal_uL22_bac/chlpt-type"/>
</dbReference>
<dbReference type="InterPro" id="IPR047867">
    <property type="entry name" value="Ribosomal_uL22_bac/org-type"/>
</dbReference>
<dbReference type="InterPro" id="IPR018260">
    <property type="entry name" value="Ribosomal_uL22_CS"/>
</dbReference>
<dbReference type="InterPro" id="IPR036394">
    <property type="entry name" value="Ribosomal_uL22_sf"/>
</dbReference>
<dbReference type="NCBIfam" id="TIGR01044">
    <property type="entry name" value="rplV_bact"/>
    <property type="match status" value="1"/>
</dbReference>
<dbReference type="PANTHER" id="PTHR13501">
    <property type="entry name" value="CHLOROPLAST 50S RIBOSOMAL PROTEIN L22-RELATED"/>
    <property type="match status" value="1"/>
</dbReference>
<dbReference type="PANTHER" id="PTHR13501:SF8">
    <property type="entry name" value="LARGE RIBOSOMAL SUBUNIT PROTEIN UL22M"/>
    <property type="match status" value="1"/>
</dbReference>
<dbReference type="Pfam" id="PF00237">
    <property type="entry name" value="Ribosomal_L22"/>
    <property type="match status" value="1"/>
</dbReference>
<dbReference type="SUPFAM" id="SSF54843">
    <property type="entry name" value="Ribosomal protein L22"/>
    <property type="match status" value="1"/>
</dbReference>
<dbReference type="PROSITE" id="PS00464">
    <property type="entry name" value="RIBOSOMAL_L22"/>
    <property type="match status" value="1"/>
</dbReference>
<name>RL22_STRPN</name>
<gene>
    <name type="primary">rplV</name>
    <name type="ordered locus">SP_0214</name>
</gene>
<reference key="1">
    <citation type="journal article" date="2000" name="Antimicrob. Agents Chemother.">
        <title>Mutations in ribosomal protein L16 conferring reduced susceptibility to evernimicin (SCH27899): implications for mechanism of action.</title>
        <authorList>
            <person name="Adrian P.V."/>
            <person name="Zhao W."/>
            <person name="Black T.A."/>
            <person name="Shaw K.J."/>
            <person name="Hare R.S."/>
            <person name="Klugman K.P."/>
        </authorList>
    </citation>
    <scope>NUCLEOTIDE SEQUENCE [GENOMIC DNA]</scope>
    <source>
        <strain>SP#5</strain>
        <strain>ZR1</strain>
    </source>
</reference>
<reference key="2">
    <citation type="journal article" date="2001" name="Science">
        <title>Complete genome sequence of a virulent isolate of Streptococcus pneumoniae.</title>
        <authorList>
            <person name="Tettelin H."/>
            <person name="Nelson K.E."/>
            <person name="Paulsen I.T."/>
            <person name="Eisen J.A."/>
            <person name="Read T.D."/>
            <person name="Peterson S.N."/>
            <person name="Heidelberg J.F."/>
            <person name="DeBoy R.T."/>
            <person name="Haft D.H."/>
            <person name="Dodson R.J."/>
            <person name="Durkin A.S."/>
            <person name="Gwinn M.L."/>
            <person name="Kolonay J.F."/>
            <person name="Nelson W.C."/>
            <person name="Peterson J.D."/>
            <person name="Umayam L.A."/>
            <person name="White O."/>
            <person name="Salzberg S.L."/>
            <person name="Lewis M.R."/>
            <person name="Radune D."/>
            <person name="Holtzapple E.K."/>
            <person name="Khouri H.M."/>
            <person name="Wolf A.M."/>
            <person name="Utterback T.R."/>
            <person name="Hansen C.L."/>
            <person name="McDonald L.A."/>
            <person name="Feldblyum T.V."/>
            <person name="Angiuoli S.V."/>
            <person name="Dickinson T."/>
            <person name="Hickey E.K."/>
            <person name="Holt I.E."/>
            <person name="Loftus B.J."/>
            <person name="Yang F."/>
            <person name="Smith H.O."/>
            <person name="Venter J.C."/>
            <person name="Dougherty B.A."/>
            <person name="Morrison D.A."/>
            <person name="Hollingshead S.K."/>
            <person name="Fraser C.M."/>
        </authorList>
    </citation>
    <scope>NUCLEOTIDE SEQUENCE [LARGE SCALE GENOMIC DNA]</scope>
    <source>
        <strain>ATCC BAA-334 / TIGR4</strain>
    </source>
</reference>
<reference key="3">
    <citation type="journal article" date="2002" name="Antimicrob. Agents Chemother.">
        <title>Diversity of ribosomal mutations conferring resistance to macrolides, clindamycin, streptogramin, and telithromycin in Streptococcus pneumoniae.</title>
        <authorList>
            <person name="Canu A."/>
            <person name="Malbruny B."/>
            <person name="Coquemont M."/>
            <person name="Davies T.A."/>
            <person name="Appelbaum P.C."/>
            <person name="Leclercq R."/>
        </authorList>
    </citation>
    <scope>VARIANTS ASP-95 AND GLN-99</scope>
    <scope>MUTAGENESIS OF ALA-93</scope>
    <source>
        <strain>CP1000</strain>
    </source>
</reference>
<reference key="4">
    <citation type="journal article" date="2003" name="Emerg. Infect. Dis.">
        <title>Fluoroquinolone and macrolide treatment failure in pneumococcal pneumonia and selection of multidrug-resistant isolates.</title>
        <authorList>
            <person name="Perez-Trallero E."/>
            <person name="Marimon J.M."/>
            <person name="Iglesias L."/>
            <person name="Larruskain J."/>
        </authorList>
    </citation>
    <scope>VARIANT ARG-THR-ALA-HIS-ILE-THR-108 INS</scope>
    <source>
        <strain>Serotype 3</strain>
    </source>
</reference>
<reference key="5">
    <citation type="journal article" date="2003" name="J. Antimicrob. Chemother.">
        <title>High-level telithromycin resistance in laboratory-generated mutants of Streptococcus pneumoniae.</title>
        <authorList>
            <person name="Walsh F."/>
            <person name="Willcock J."/>
            <person name="Amyes S."/>
        </authorList>
    </citation>
    <scope>VARIANT JII8 GLN-94</scope>
    <source>
        <strain>02J1095</strain>
    </source>
</reference>
<accession>P61182</accession>
<accession>Q8GL54</accession>
<accession>Q9WVU5</accession>
<sequence length="114" mass="12200">MAEITSAKAMARTVRVSPRKSRLVLDNIRGKSVADAIAILTFTPNKAAEIILKVLNSAVANAENNFGLDKANLVVSEAFANEGPTMKRFRPRAKGSASPINKRTAHITVAVAEK</sequence>
<proteinExistence type="evidence at protein level"/>
<evidence type="ECO:0000250" key="1"/>
<evidence type="ECO:0000269" key="2">
    <source>
    </source>
</evidence>
<evidence type="ECO:0000269" key="3">
    <source>
    </source>
</evidence>
<evidence type="ECO:0000269" key="4">
    <source>
    </source>
</evidence>
<evidence type="ECO:0000305" key="5"/>
<comment type="function">
    <text evidence="1">This protein binds specifically to 23S rRNA; its binding is stimulated by other ribosomal proteins, e.g. L4, L17, and L20. It is important during the early stages of 50S assembly. It makes multiple contacts with different domains of the 23S rRNA in the assembled 50S subunit and ribosome (By similarity).</text>
</comment>
<comment type="function">
    <text evidence="1">The globular domain of the protein is located near the polypeptide exit tunnel on the outside of the subunit, while an extended beta-hairpin is found that lines the wall of the exit tunnel in the center of the 70S ribosome.</text>
</comment>
<comment type="subunit">
    <text>Part of the 50S ribosomal subunit.</text>
</comment>
<comment type="similarity">
    <text evidence="5">Belongs to the universal ribosomal protein uL22 family.</text>
</comment>
<protein>
    <recommendedName>
        <fullName evidence="5">Large ribosomal subunit protein uL22</fullName>
    </recommendedName>
    <alternativeName>
        <fullName>50S ribosomal protein L22</fullName>
    </alternativeName>
</protein>
<keyword id="KW-0046">Antibiotic resistance</keyword>
<keyword id="KW-1185">Reference proteome</keyword>
<keyword id="KW-0687">Ribonucleoprotein</keyword>
<keyword id="KW-0689">Ribosomal protein</keyword>
<keyword id="KW-0694">RNA-binding</keyword>
<keyword id="KW-0699">rRNA-binding</keyword>
<organism>
    <name type="scientific">Streptococcus pneumoniae serotype 4 (strain ATCC BAA-334 / TIGR4)</name>
    <dbReference type="NCBI Taxonomy" id="170187"/>
    <lineage>
        <taxon>Bacteria</taxon>
        <taxon>Bacillati</taxon>
        <taxon>Bacillota</taxon>
        <taxon>Bacilli</taxon>
        <taxon>Lactobacillales</taxon>
        <taxon>Streptococcaceae</taxon>
        <taxon>Streptococcus</taxon>
    </lineage>
</organism>
<feature type="chain" id="PRO_0000125236" description="Large ribosomal subunit protein uL22">
    <location>
        <begin position="1"/>
        <end position="114"/>
    </location>
</feature>
<feature type="sequence variant" description="In JII8; confers telithromycin resistance; when associated with a large deletion in the upstream region of ErmB." evidence="3">
    <original>K</original>
    <variation>Q</variation>
    <location>
        <position position="94"/>
    </location>
</feature>
<feature type="sequence variant" description="In strain: 3ERY and 5ROX; confers antibiotic resistance." evidence="2">
    <original>G</original>
    <variation>D</variation>
    <location>
        <position position="95"/>
    </location>
</feature>
<feature type="sequence variant" description="In strain: 4ERY; confers antibiotic resistance." evidence="2">
    <original>P</original>
    <variation>Q</variation>
    <location>
        <position position="99"/>
    </location>
</feature>
<feature type="sequence variant" description="In a serotype 3 clinical isolate, confers resistance to macrolide and fluoroquinolone antibiotics." evidence="4">
    <original>T</original>
    <variation>TRTAHIT</variation>
    <location>
        <position position="108"/>
    </location>
</feature>
<feature type="mutagenesis site" description="Confers antibiotic resistance." evidence="2">
    <original>A</original>
    <variation>E</variation>
    <location>
        <position position="93"/>
    </location>
</feature>